<accession>Q2S415</accession>
<keyword id="KW-0030">Aminoacyl-tRNA synthetase</keyword>
<keyword id="KW-0067">ATP-binding</keyword>
<keyword id="KW-0963">Cytoplasm</keyword>
<keyword id="KW-0436">Ligase</keyword>
<keyword id="KW-0547">Nucleotide-binding</keyword>
<keyword id="KW-0648">Protein biosynthesis</keyword>
<keyword id="KW-1185">Reference proteome</keyword>
<name>SYL_SALRD</name>
<protein>
    <recommendedName>
        <fullName evidence="1">Leucine--tRNA ligase</fullName>
        <ecNumber evidence="1">6.1.1.4</ecNumber>
    </recommendedName>
    <alternativeName>
        <fullName evidence="1">Leucyl-tRNA synthetase</fullName>
        <shortName evidence="1">LeuRS</shortName>
    </alternativeName>
</protein>
<reference key="1">
    <citation type="journal article" date="2005" name="Proc. Natl. Acad. Sci. U.S.A.">
        <title>The genome of Salinibacter ruber: convergence and gene exchange among hyperhalophilic bacteria and archaea.</title>
        <authorList>
            <person name="Mongodin E.F."/>
            <person name="Nelson K.E."/>
            <person name="Daugherty S."/>
            <person name="DeBoy R.T."/>
            <person name="Wister J."/>
            <person name="Khouri H."/>
            <person name="Weidman J."/>
            <person name="Walsh D.A."/>
            <person name="Papke R.T."/>
            <person name="Sanchez Perez G."/>
            <person name="Sharma A.K."/>
            <person name="Nesbo C.L."/>
            <person name="MacLeod D."/>
            <person name="Bapteste E."/>
            <person name="Doolittle W.F."/>
            <person name="Charlebois R.L."/>
            <person name="Legault B."/>
            <person name="Rodriguez-Valera F."/>
        </authorList>
    </citation>
    <scope>NUCLEOTIDE SEQUENCE [LARGE SCALE GENOMIC DNA]</scope>
    <source>
        <strain>DSM 13855 / CECT 5946 / M31</strain>
    </source>
</reference>
<sequence>MAYPFHDIETKWQQYWEEHQTFRTPDEVPDDQEEFYVLDMFPYPSGSGLHVGHPEGYTATDIVARYKRKQGFNVLHPMGWDAFGLPAEQYALKTNTHPRETTEKNIAQFKRQLKRLGFSYDWQREINTTDPDYYKWTQWIFLQLYEKGLAYQSEEPVWWCEELGTVLANEEVIDGKSERGGYPCERVPMRQWVLKITEYADRLLEGLEDLDWPESTKEMQRNWIGRSEGANVYFDLVGADDALEVYTTRPDTLFGATYMVLAPEHELLDEITTDEHREDVDEYCRQALRKSERKRQQQGDKTGVFTGGYAVNPVNGEEIPIWVADYVLVSYGTGAIMAVPAHDERDHAFANKYDLPIREVVEGGDIDEEAYTGDGPHVHSANEAVSLNGLRNEEAKEAITEWLDEEEKGERTVNYQLQDWLFSRQRYWGEPFPIVFTEDGEDKPVPEEELPVTLPDLDVFEPSGTPEGPLATIEDWRETTDPETGEPAQRETNTMPQWAGSCWYYLRFIDPDNDEQLVDPEKEEYWMPVDLYVGGSEHAVLHLLYARFWHKVLYDAGVVSTKEPFQTLVHQGMILGETEYTAYRDDAGEFVSAEQVDDDADLTPVPVDDGDVKKDGDVFVLADRPAVRVDARSHKMSKSRGNVINPDDVVDEYGADTLRLYEMFMGPLEQDKPWSTDDMEGVHRFLNRIWRLVVDADSGGLAVSDEEPDREQLRTLHRTIKTVTEDIEARDFNTAIAAMMEFVNAANKWDALPRQVATPFVLLLSPFAPHLAEELWARLGHDQSLAYADWPAYDDELIRREVVEMPVQVDGTVRATIEVAADAEEADVLATAKEAENVARHLDDEDLQREIYVPGQIVNFVTG</sequence>
<feature type="chain" id="PRO_1000009423" description="Leucine--tRNA ligase">
    <location>
        <begin position="1"/>
        <end position="863"/>
    </location>
</feature>
<feature type="short sequence motif" description="'HIGH' region">
    <location>
        <begin position="42"/>
        <end position="53"/>
    </location>
</feature>
<feature type="short sequence motif" description="'KMSKS' region">
    <location>
        <begin position="635"/>
        <end position="639"/>
    </location>
</feature>
<feature type="binding site" evidence="1">
    <location>
        <position position="638"/>
    </location>
    <ligand>
        <name>ATP</name>
        <dbReference type="ChEBI" id="CHEBI:30616"/>
    </ligand>
</feature>
<proteinExistence type="inferred from homology"/>
<organism>
    <name type="scientific">Salinibacter ruber (strain DSM 13855 / M31)</name>
    <dbReference type="NCBI Taxonomy" id="309807"/>
    <lineage>
        <taxon>Bacteria</taxon>
        <taxon>Pseudomonadati</taxon>
        <taxon>Rhodothermota</taxon>
        <taxon>Rhodothermia</taxon>
        <taxon>Rhodothermales</taxon>
        <taxon>Salinibacteraceae</taxon>
        <taxon>Salinibacter</taxon>
    </lineage>
</organism>
<comment type="catalytic activity">
    <reaction evidence="1">
        <text>tRNA(Leu) + L-leucine + ATP = L-leucyl-tRNA(Leu) + AMP + diphosphate</text>
        <dbReference type="Rhea" id="RHEA:11688"/>
        <dbReference type="Rhea" id="RHEA-COMP:9613"/>
        <dbReference type="Rhea" id="RHEA-COMP:9622"/>
        <dbReference type="ChEBI" id="CHEBI:30616"/>
        <dbReference type="ChEBI" id="CHEBI:33019"/>
        <dbReference type="ChEBI" id="CHEBI:57427"/>
        <dbReference type="ChEBI" id="CHEBI:78442"/>
        <dbReference type="ChEBI" id="CHEBI:78494"/>
        <dbReference type="ChEBI" id="CHEBI:456215"/>
        <dbReference type="EC" id="6.1.1.4"/>
    </reaction>
</comment>
<comment type="subcellular location">
    <subcellularLocation>
        <location evidence="1">Cytoplasm</location>
    </subcellularLocation>
</comment>
<comment type="similarity">
    <text evidence="1">Belongs to the class-I aminoacyl-tRNA synthetase family.</text>
</comment>
<gene>
    <name evidence="1" type="primary">leuS</name>
    <name type="ordered locus">SRU_0933</name>
</gene>
<evidence type="ECO:0000255" key="1">
    <source>
        <dbReference type="HAMAP-Rule" id="MF_00049"/>
    </source>
</evidence>
<dbReference type="EC" id="6.1.1.4" evidence="1"/>
<dbReference type="EMBL" id="CP000159">
    <property type="protein sequence ID" value="ABC46207.1"/>
    <property type="molecule type" value="Genomic_DNA"/>
</dbReference>
<dbReference type="RefSeq" id="WP_011403694.1">
    <property type="nucleotide sequence ID" value="NC_007677.1"/>
</dbReference>
<dbReference type="RefSeq" id="YP_445066.1">
    <property type="nucleotide sequence ID" value="NC_007677.1"/>
</dbReference>
<dbReference type="SMR" id="Q2S415"/>
<dbReference type="STRING" id="309807.SRU_0933"/>
<dbReference type="EnsemblBacteria" id="ABC46207">
    <property type="protein sequence ID" value="ABC46207"/>
    <property type="gene ID" value="SRU_0933"/>
</dbReference>
<dbReference type="KEGG" id="sru:SRU_0933"/>
<dbReference type="PATRIC" id="fig|309807.25.peg.967"/>
<dbReference type="eggNOG" id="COG0495">
    <property type="taxonomic scope" value="Bacteria"/>
</dbReference>
<dbReference type="HOGENOM" id="CLU_004427_0_0_10"/>
<dbReference type="OrthoDB" id="9810365at2"/>
<dbReference type="Proteomes" id="UP000008674">
    <property type="component" value="Chromosome"/>
</dbReference>
<dbReference type="GO" id="GO:0005829">
    <property type="term" value="C:cytosol"/>
    <property type="evidence" value="ECO:0007669"/>
    <property type="project" value="TreeGrafter"/>
</dbReference>
<dbReference type="GO" id="GO:0002161">
    <property type="term" value="F:aminoacyl-tRNA deacylase activity"/>
    <property type="evidence" value="ECO:0007669"/>
    <property type="project" value="InterPro"/>
</dbReference>
<dbReference type="GO" id="GO:0005524">
    <property type="term" value="F:ATP binding"/>
    <property type="evidence" value="ECO:0007669"/>
    <property type="project" value="UniProtKB-UniRule"/>
</dbReference>
<dbReference type="GO" id="GO:0004823">
    <property type="term" value="F:leucine-tRNA ligase activity"/>
    <property type="evidence" value="ECO:0007669"/>
    <property type="project" value="UniProtKB-UniRule"/>
</dbReference>
<dbReference type="GO" id="GO:0006429">
    <property type="term" value="P:leucyl-tRNA aminoacylation"/>
    <property type="evidence" value="ECO:0007669"/>
    <property type="project" value="UniProtKB-UniRule"/>
</dbReference>
<dbReference type="CDD" id="cd07958">
    <property type="entry name" value="Anticodon_Ia_Leu_BEm"/>
    <property type="match status" value="1"/>
</dbReference>
<dbReference type="CDD" id="cd00812">
    <property type="entry name" value="LeuRS_core"/>
    <property type="match status" value="1"/>
</dbReference>
<dbReference type="FunFam" id="1.10.730.10:FF:000012">
    <property type="entry name" value="Leucine--tRNA ligase"/>
    <property type="match status" value="1"/>
</dbReference>
<dbReference type="FunFam" id="3.40.50.620:FF:000056">
    <property type="entry name" value="Leucine--tRNA ligase"/>
    <property type="match status" value="1"/>
</dbReference>
<dbReference type="FunFam" id="3.40.50.620:FF:000077">
    <property type="entry name" value="Leucine--tRNA ligase"/>
    <property type="match status" value="1"/>
</dbReference>
<dbReference type="FunFam" id="1.10.730.10:FF:000011">
    <property type="entry name" value="Leucine--tRNA ligase chloroplastic/mitochondrial"/>
    <property type="match status" value="1"/>
</dbReference>
<dbReference type="Gene3D" id="3.40.50.620">
    <property type="entry name" value="HUPs"/>
    <property type="match status" value="2"/>
</dbReference>
<dbReference type="Gene3D" id="1.10.730.10">
    <property type="entry name" value="Isoleucyl-tRNA Synthetase, Domain 1"/>
    <property type="match status" value="1"/>
</dbReference>
<dbReference type="HAMAP" id="MF_00049_B">
    <property type="entry name" value="Leu_tRNA_synth_B"/>
    <property type="match status" value="1"/>
</dbReference>
<dbReference type="InterPro" id="IPR002300">
    <property type="entry name" value="aa-tRNA-synth_Ia"/>
</dbReference>
<dbReference type="InterPro" id="IPR002302">
    <property type="entry name" value="Leu-tRNA-ligase"/>
</dbReference>
<dbReference type="InterPro" id="IPR025709">
    <property type="entry name" value="Leu_tRNA-synth_edit"/>
</dbReference>
<dbReference type="InterPro" id="IPR013155">
    <property type="entry name" value="M/V/L/I-tRNA-synth_anticd-bd"/>
</dbReference>
<dbReference type="InterPro" id="IPR015413">
    <property type="entry name" value="Methionyl/Leucyl_tRNA_Synth"/>
</dbReference>
<dbReference type="InterPro" id="IPR014729">
    <property type="entry name" value="Rossmann-like_a/b/a_fold"/>
</dbReference>
<dbReference type="InterPro" id="IPR009080">
    <property type="entry name" value="tRNAsynth_Ia_anticodon-bd"/>
</dbReference>
<dbReference type="InterPro" id="IPR009008">
    <property type="entry name" value="Val/Leu/Ile-tRNA-synth_edit"/>
</dbReference>
<dbReference type="NCBIfam" id="TIGR00396">
    <property type="entry name" value="leuS_bact"/>
    <property type="match status" value="1"/>
</dbReference>
<dbReference type="PANTHER" id="PTHR43740:SF2">
    <property type="entry name" value="LEUCINE--TRNA LIGASE, MITOCHONDRIAL"/>
    <property type="match status" value="1"/>
</dbReference>
<dbReference type="PANTHER" id="PTHR43740">
    <property type="entry name" value="LEUCYL-TRNA SYNTHETASE"/>
    <property type="match status" value="1"/>
</dbReference>
<dbReference type="Pfam" id="PF08264">
    <property type="entry name" value="Anticodon_1"/>
    <property type="match status" value="1"/>
</dbReference>
<dbReference type="Pfam" id="PF00133">
    <property type="entry name" value="tRNA-synt_1"/>
    <property type="match status" value="2"/>
</dbReference>
<dbReference type="Pfam" id="PF13603">
    <property type="entry name" value="tRNA-synt_1_2"/>
    <property type="match status" value="1"/>
</dbReference>
<dbReference type="Pfam" id="PF09334">
    <property type="entry name" value="tRNA-synt_1g"/>
    <property type="match status" value="1"/>
</dbReference>
<dbReference type="PRINTS" id="PR00985">
    <property type="entry name" value="TRNASYNTHLEU"/>
</dbReference>
<dbReference type="SUPFAM" id="SSF47323">
    <property type="entry name" value="Anticodon-binding domain of a subclass of class I aminoacyl-tRNA synthetases"/>
    <property type="match status" value="1"/>
</dbReference>
<dbReference type="SUPFAM" id="SSF52374">
    <property type="entry name" value="Nucleotidylyl transferase"/>
    <property type="match status" value="1"/>
</dbReference>
<dbReference type="SUPFAM" id="SSF50677">
    <property type="entry name" value="ValRS/IleRS/LeuRS editing domain"/>
    <property type="match status" value="1"/>
</dbReference>